<organism>
    <name type="scientific">Clostridium botulinum (strain ATCC 19397 / Type A)</name>
    <dbReference type="NCBI Taxonomy" id="441770"/>
    <lineage>
        <taxon>Bacteria</taxon>
        <taxon>Bacillati</taxon>
        <taxon>Bacillota</taxon>
        <taxon>Clostridia</taxon>
        <taxon>Eubacteriales</taxon>
        <taxon>Clostridiaceae</taxon>
        <taxon>Clostridium</taxon>
    </lineage>
</organism>
<evidence type="ECO:0000255" key="1">
    <source>
        <dbReference type="HAMAP-Rule" id="MF_01346"/>
    </source>
</evidence>
<comment type="function">
    <text evidence="1">Produces ATP from ADP in the presence of a proton gradient across the membrane. The alpha chain is a regulatory subunit.</text>
</comment>
<comment type="catalytic activity">
    <reaction evidence="1">
        <text>ATP + H2O + 4 H(+)(in) = ADP + phosphate + 5 H(+)(out)</text>
        <dbReference type="Rhea" id="RHEA:57720"/>
        <dbReference type="ChEBI" id="CHEBI:15377"/>
        <dbReference type="ChEBI" id="CHEBI:15378"/>
        <dbReference type="ChEBI" id="CHEBI:30616"/>
        <dbReference type="ChEBI" id="CHEBI:43474"/>
        <dbReference type="ChEBI" id="CHEBI:456216"/>
        <dbReference type="EC" id="7.1.2.2"/>
    </reaction>
</comment>
<comment type="subunit">
    <text evidence="1">F-type ATPases have 2 components, CF(1) - the catalytic core - and CF(0) - the membrane proton channel. CF(1) has five subunits: alpha(3), beta(3), gamma(1), delta(1), epsilon(1). CF(0) has three main subunits: a(1), b(2) and c(9-12). The alpha and beta chains form an alternating ring which encloses part of the gamma chain. CF(1) is attached to CF(0) by a central stalk formed by the gamma and epsilon chains, while a peripheral stalk is formed by the delta and b chains.</text>
</comment>
<comment type="subcellular location">
    <subcellularLocation>
        <location evidence="1">Cell membrane</location>
        <topology evidence="1">Peripheral membrane protein</topology>
    </subcellularLocation>
</comment>
<comment type="similarity">
    <text evidence="1">Belongs to the ATPase alpha/beta chains family.</text>
</comment>
<reference key="1">
    <citation type="journal article" date="2007" name="PLoS ONE">
        <title>Analysis of the neurotoxin complex genes in Clostridium botulinum A1-A4 and B1 strains: BoNT/A3, /Ba4 and /B1 clusters are located within plasmids.</title>
        <authorList>
            <person name="Smith T.J."/>
            <person name="Hill K.K."/>
            <person name="Foley B.T."/>
            <person name="Detter J.C."/>
            <person name="Munk A.C."/>
            <person name="Bruce D.C."/>
            <person name="Doggett N.A."/>
            <person name="Smith L.A."/>
            <person name="Marks J.D."/>
            <person name="Xie G."/>
            <person name="Brettin T.S."/>
        </authorList>
    </citation>
    <scope>NUCLEOTIDE SEQUENCE [LARGE SCALE GENOMIC DNA]</scope>
    <source>
        <strain>ATCC 19397 / Type A</strain>
    </source>
</reference>
<proteinExistence type="inferred from homology"/>
<gene>
    <name evidence="1" type="primary">atpA</name>
    <name type="ordered locus">CLB_0190</name>
</gene>
<keyword id="KW-0066">ATP synthesis</keyword>
<keyword id="KW-0067">ATP-binding</keyword>
<keyword id="KW-1003">Cell membrane</keyword>
<keyword id="KW-0139">CF(1)</keyword>
<keyword id="KW-0375">Hydrogen ion transport</keyword>
<keyword id="KW-0406">Ion transport</keyword>
<keyword id="KW-0472">Membrane</keyword>
<keyword id="KW-0547">Nucleotide-binding</keyword>
<keyword id="KW-1278">Translocase</keyword>
<keyword id="KW-0813">Transport</keyword>
<dbReference type="EC" id="7.1.2.2" evidence="1"/>
<dbReference type="EMBL" id="CP000726">
    <property type="protein sequence ID" value="ABS35606.1"/>
    <property type="molecule type" value="Genomic_DNA"/>
</dbReference>
<dbReference type="RefSeq" id="WP_003356056.1">
    <property type="nucleotide sequence ID" value="NC_009697.1"/>
</dbReference>
<dbReference type="SMR" id="A7FQH7"/>
<dbReference type="GeneID" id="5184409"/>
<dbReference type="KEGG" id="cba:CLB_0190"/>
<dbReference type="HOGENOM" id="CLU_010091_2_1_9"/>
<dbReference type="GO" id="GO:0005886">
    <property type="term" value="C:plasma membrane"/>
    <property type="evidence" value="ECO:0007669"/>
    <property type="project" value="UniProtKB-SubCell"/>
</dbReference>
<dbReference type="GO" id="GO:0045259">
    <property type="term" value="C:proton-transporting ATP synthase complex"/>
    <property type="evidence" value="ECO:0007669"/>
    <property type="project" value="UniProtKB-KW"/>
</dbReference>
<dbReference type="GO" id="GO:0043531">
    <property type="term" value="F:ADP binding"/>
    <property type="evidence" value="ECO:0007669"/>
    <property type="project" value="TreeGrafter"/>
</dbReference>
<dbReference type="GO" id="GO:0005524">
    <property type="term" value="F:ATP binding"/>
    <property type="evidence" value="ECO:0007669"/>
    <property type="project" value="UniProtKB-UniRule"/>
</dbReference>
<dbReference type="GO" id="GO:0046933">
    <property type="term" value="F:proton-transporting ATP synthase activity, rotational mechanism"/>
    <property type="evidence" value="ECO:0007669"/>
    <property type="project" value="UniProtKB-UniRule"/>
</dbReference>
<dbReference type="CDD" id="cd18113">
    <property type="entry name" value="ATP-synt_F1_alpha_C"/>
    <property type="match status" value="1"/>
</dbReference>
<dbReference type="CDD" id="cd18116">
    <property type="entry name" value="ATP-synt_F1_alpha_N"/>
    <property type="match status" value="1"/>
</dbReference>
<dbReference type="CDD" id="cd01132">
    <property type="entry name" value="F1-ATPase_alpha_CD"/>
    <property type="match status" value="1"/>
</dbReference>
<dbReference type="FunFam" id="1.20.150.20:FF:000001">
    <property type="entry name" value="ATP synthase subunit alpha"/>
    <property type="match status" value="1"/>
</dbReference>
<dbReference type="FunFam" id="2.40.30.20:FF:000001">
    <property type="entry name" value="ATP synthase subunit alpha"/>
    <property type="match status" value="1"/>
</dbReference>
<dbReference type="FunFam" id="3.40.50.300:FF:000002">
    <property type="entry name" value="ATP synthase subunit alpha"/>
    <property type="match status" value="1"/>
</dbReference>
<dbReference type="Gene3D" id="2.40.30.20">
    <property type="match status" value="1"/>
</dbReference>
<dbReference type="Gene3D" id="1.20.150.20">
    <property type="entry name" value="ATP synthase alpha/beta chain, C-terminal domain"/>
    <property type="match status" value="1"/>
</dbReference>
<dbReference type="Gene3D" id="3.40.50.300">
    <property type="entry name" value="P-loop containing nucleotide triphosphate hydrolases"/>
    <property type="match status" value="1"/>
</dbReference>
<dbReference type="HAMAP" id="MF_01346">
    <property type="entry name" value="ATP_synth_alpha_bact"/>
    <property type="match status" value="1"/>
</dbReference>
<dbReference type="InterPro" id="IPR023366">
    <property type="entry name" value="ATP_synth_asu-like_sf"/>
</dbReference>
<dbReference type="InterPro" id="IPR000793">
    <property type="entry name" value="ATP_synth_asu_C"/>
</dbReference>
<dbReference type="InterPro" id="IPR038376">
    <property type="entry name" value="ATP_synth_asu_C_sf"/>
</dbReference>
<dbReference type="InterPro" id="IPR033732">
    <property type="entry name" value="ATP_synth_F1_a_nt-bd_dom"/>
</dbReference>
<dbReference type="InterPro" id="IPR005294">
    <property type="entry name" value="ATP_synth_F1_asu"/>
</dbReference>
<dbReference type="InterPro" id="IPR020003">
    <property type="entry name" value="ATPase_a/bsu_AS"/>
</dbReference>
<dbReference type="InterPro" id="IPR004100">
    <property type="entry name" value="ATPase_F1/V1/A1_a/bsu_N"/>
</dbReference>
<dbReference type="InterPro" id="IPR036121">
    <property type="entry name" value="ATPase_F1/V1/A1_a/bsu_N_sf"/>
</dbReference>
<dbReference type="InterPro" id="IPR000194">
    <property type="entry name" value="ATPase_F1/V1/A1_a/bsu_nucl-bd"/>
</dbReference>
<dbReference type="InterPro" id="IPR027417">
    <property type="entry name" value="P-loop_NTPase"/>
</dbReference>
<dbReference type="NCBIfam" id="TIGR00962">
    <property type="entry name" value="atpA"/>
    <property type="match status" value="1"/>
</dbReference>
<dbReference type="NCBIfam" id="NF009884">
    <property type="entry name" value="PRK13343.1"/>
    <property type="match status" value="1"/>
</dbReference>
<dbReference type="PANTHER" id="PTHR48082">
    <property type="entry name" value="ATP SYNTHASE SUBUNIT ALPHA, MITOCHONDRIAL"/>
    <property type="match status" value="1"/>
</dbReference>
<dbReference type="PANTHER" id="PTHR48082:SF2">
    <property type="entry name" value="ATP SYNTHASE SUBUNIT ALPHA, MITOCHONDRIAL"/>
    <property type="match status" value="1"/>
</dbReference>
<dbReference type="Pfam" id="PF00006">
    <property type="entry name" value="ATP-synt_ab"/>
    <property type="match status" value="1"/>
</dbReference>
<dbReference type="Pfam" id="PF00306">
    <property type="entry name" value="ATP-synt_ab_C"/>
    <property type="match status" value="1"/>
</dbReference>
<dbReference type="Pfam" id="PF02874">
    <property type="entry name" value="ATP-synt_ab_N"/>
    <property type="match status" value="1"/>
</dbReference>
<dbReference type="PIRSF" id="PIRSF039088">
    <property type="entry name" value="F_ATPase_subunit_alpha"/>
    <property type="match status" value="1"/>
</dbReference>
<dbReference type="SUPFAM" id="SSF47917">
    <property type="entry name" value="C-terminal domain of alpha and beta subunits of F1 ATP synthase"/>
    <property type="match status" value="1"/>
</dbReference>
<dbReference type="SUPFAM" id="SSF50615">
    <property type="entry name" value="N-terminal domain of alpha and beta subunits of F1 ATP synthase"/>
    <property type="match status" value="1"/>
</dbReference>
<dbReference type="SUPFAM" id="SSF52540">
    <property type="entry name" value="P-loop containing nucleoside triphosphate hydrolases"/>
    <property type="match status" value="1"/>
</dbReference>
<dbReference type="PROSITE" id="PS00152">
    <property type="entry name" value="ATPASE_ALPHA_BETA"/>
    <property type="match status" value="1"/>
</dbReference>
<protein>
    <recommendedName>
        <fullName evidence="1">ATP synthase subunit alpha</fullName>
        <ecNumber evidence="1">7.1.2.2</ecNumber>
    </recommendedName>
    <alternativeName>
        <fullName evidence="1">ATP synthase F1 sector subunit alpha</fullName>
    </alternativeName>
    <alternativeName>
        <fullName evidence="1">F-ATPase subunit alpha</fullName>
    </alternativeName>
</protein>
<sequence length="504" mass="55426">MNIKPEEITSIIRQQIENFNTNIETIDSGTIIQIGDGIARVYGLEDCMEGELIEFPNDVYGMALNLEQDNVGCVLLGSEEGIKEGNVVKRTKKVVEVPVGEALVGRVVNSLGMPIDGKGPVLTTETRDVEVPAPGVIDRQSVKEPLQTGIKAIDSMIPIGKGQRELIIGDRQTGKTAIAMDTILNQKGKDVICIYVAIGQKQSTVAHIVNDLTKMGAMDYTIVVSSTASDSAPLQYLAPYAGCSMGEYFMHKGKDVLIVYDDLSKHAVAYRTMSLLLRRPPGREAYPGDVFYLHSRLLERSARLSEKLGGGSLTALPIVETLAGDVTAYIPTNVISITDGQIFLESELFNAGQRPAVNAGISVSRVGGNAQIKAMKQVAGTLRLELAQYRELAAFSQFGSDLDKESVKRLEKGKRLVEILKQPQYSPMPVEKEIIILYAAVSNHLIDIPVNKIKEFEKELFNYIDTHYRDIGKDILEHKQLTDELKSKLDKAINDFKNVFLSEI</sequence>
<accession>A7FQH7</accession>
<name>ATPA_CLOB1</name>
<feature type="chain" id="PRO_1000055062" description="ATP synthase subunit alpha">
    <location>
        <begin position="1"/>
        <end position="504"/>
    </location>
</feature>
<feature type="binding site" evidence="1">
    <location>
        <begin position="169"/>
        <end position="176"/>
    </location>
    <ligand>
        <name>ATP</name>
        <dbReference type="ChEBI" id="CHEBI:30616"/>
    </ligand>
</feature>
<feature type="site" description="Required for activity" evidence="1">
    <location>
        <position position="362"/>
    </location>
</feature>